<keyword id="KW-0067">ATP-binding</keyword>
<keyword id="KW-0418">Kinase</keyword>
<keyword id="KW-0460">Magnesium</keyword>
<keyword id="KW-0479">Metal-binding</keyword>
<keyword id="KW-0547">Nucleotide-binding</keyword>
<keyword id="KW-1185">Reference proteome</keyword>
<keyword id="KW-0784">Thiamine biosynthesis</keyword>
<keyword id="KW-0808">Transferase</keyword>
<protein>
    <recommendedName>
        <fullName evidence="1">Hydroxyethylthiazole kinase</fullName>
        <ecNumber evidence="1">2.7.1.50</ecNumber>
    </recommendedName>
    <alternativeName>
        <fullName evidence="1">4-methyl-5-beta-hydroxyethylthiazole kinase</fullName>
        <shortName evidence="1">TH kinase</shortName>
        <shortName evidence="1">Thz kinase</shortName>
    </alternativeName>
</protein>
<evidence type="ECO:0000255" key="1">
    <source>
        <dbReference type="HAMAP-Rule" id="MF_00228"/>
    </source>
</evidence>
<dbReference type="EC" id="2.7.1.50" evidence="1"/>
<dbReference type="EMBL" id="CP000362">
    <property type="protein sequence ID" value="ABG33088.1"/>
    <property type="molecule type" value="Genomic_DNA"/>
</dbReference>
<dbReference type="RefSeq" id="WP_011569701.1">
    <property type="nucleotide sequence ID" value="NC_008209.1"/>
</dbReference>
<dbReference type="SMR" id="Q162K5"/>
<dbReference type="STRING" id="375451.RD1_3610"/>
<dbReference type="KEGG" id="rde:RD1_3610"/>
<dbReference type="eggNOG" id="COG2145">
    <property type="taxonomic scope" value="Bacteria"/>
</dbReference>
<dbReference type="HOGENOM" id="CLU_019943_0_1_5"/>
<dbReference type="OrthoDB" id="8909021at2"/>
<dbReference type="UniPathway" id="UPA00060">
    <property type="reaction ID" value="UER00139"/>
</dbReference>
<dbReference type="Proteomes" id="UP000007029">
    <property type="component" value="Chromosome"/>
</dbReference>
<dbReference type="GO" id="GO:0005524">
    <property type="term" value="F:ATP binding"/>
    <property type="evidence" value="ECO:0007669"/>
    <property type="project" value="UniProtKB-UniRule"/>
</dbReference>
<dbReference type="GO" id="GO:0004417">
    <property type="term" value="F:hydroxyethylthiazole kinase activity"/>
    <property type="evidence" value="ECO:0007669"/>
    <property type="project" value="UniProtKB-UniRule"/>
</dbReference>
<dbReference type="GO" id="GO:0000287">
    <property type="term" value="F:magnesium ion binding"/>
    <property type="evidence" value="ECO:0007669"/>
    <property type="project" value="UniProtKB-UniRule"/>
</dbReference>
<dbReference type="GO" id="GO:0009228">
    <property type="term" value="P:thiamine biosynthetic process"/>
    <property type="evidence" value="ECO:0007669"/>
    <property type="project" value="UniProtKB-KW"/>
</dbReference>
<dbReference type="GO" id="GO:0009229">
    <property type="term" value="P:thiamine diphosphate biosynthetic process"/>
    <property type="evidence" value="ECO:0007669"/>
    <property type="project" value="UniProtKB-UniRule"/>
</dbReference>
<dbReference type="CDD" id="cd01170">
    <property type="entry name" value="THZ_kinase"/>
    <property type="match status" value="1"/>
</dbReference>
<dbReference type="Gene3D" id="3.40.1190.20">
    <property type="match status" value="1"/>
</dbReference>
<dbReference type="HAMAP" id="MF_00228">
    <property type="entry name" value="Thz_kinase"/>
    <property type="match status" value="1"/>
</dbReference>
<dbReference type="InterPro" id="IPR000417">
    <property type="entry name" value="Hyethyz_kinase"/>
</dbReference>
<dbReference type="InterPro" id="IPR029056">
    <property type="entry name" value="Ribokinase-like"/>
</dbReference>
<dbReference type="NCBIfam" id="NF006830">
    <property type="entry name" value="PRK09355.1"/>
    <property type="match status" value="1"/>
</dbReference>
<dbReference type="NCBIfam" id="TIGR00694">
    <property type="entry name" value="thiM"/>
    <property type="match status" value="1"/>
</dbReference>
<dbReference type="Pfam" id="PF02110">
    <property type="entry name" value="HK"/>
    <property type="match status" value="1"/>
</dbReference>
<dbReference type="PIRSF" id="PIRSF000513">
    <property type="entry name" value="Thz_kinase"/>
    <property type="match status" value="1"/>
</dbReference>
<dbReference type="PRINTS" id="PR01099">
    <property type="entry name" value="HYETHTZKNASE"/>
</dbReference>
<dbReference type="SUPFAM" id="SSF53613">
    <property type="entry name" value="Ribokinase-like"/>
    <property type="match status" value="1"/>
</dbReference>
<organism>
    <name type="scientific">Roseobacter denitrificans (strain ATCC 33942 / OCh 114)</name>
    <name type="common">Erythrobacter sp. (strain OCh 114)</name>
    <name type="synonym">Roseobacter denitrificans</name>
    <dbReference type="NCBI Taxonomy" id="375451"/>
    <lineage>
        <taxon>Bacteria</taxon>
        <taxon>Pseudomonadati</taxon>
        <taxon>Pseudomonadota</taxon>
        <taxon>Alphaproteobacteria</taxon>
        <taxon>Rhodobacterales</taxon>
        <taxon>Roseobacteraceae</taxon>
        <taxon>Roseobacter</taxon>
    </lineage>
</organism>
<gene>
    <name evidence="1" type="primary">thiM</name>
    <name type="ordered locus">RD1_3610</name>
</gene>
<name>THIM_ROSDO</name>
<feature type="chain" id="PRO_0000336569" description="Hydroxyethylthiazole kinase">
    <location>
        <begin position="1"/>
        <end position="257"/>
    </location>
</feature>
<feature type="binding site" evidence="1">
    <location>
        <position position="42"/>
    </location>
    <ligand>
        <name>substrate</name>
    </ligand>
</feature>
<feature type="binding site" evidence="1">
    <location>
        <position position="117"/>
    </location>
    <ligand>
        <name>ATP</name>
        <dbReference type="ChEBI" id="CHEBI:30616"/>
    </ligand>
</feature>
<feature type="binding site" evidence="1">
    <location>
        <position position="163"/>
    </location>
    <ligand>
        <name>ATP</name>
        <dbReference type="ChEBI" id="CHEBI:30616"/>
    </ligand>
</feature>
<feature type="binding site" evidence="1">
    <location>
        <position position="190"/>
    </location>
    <ligand>
        <name>substrate</name>
    </ligand>
</feature>
<proteinExistence type="inferred from homology"/>
<sequence>MAPHDLLTALRDQNPLVHCITNYVAMNIAANVVLAAGASPAMVHAPEEIAEFTPICGALTINIGTISTPWQASMMAAAATASAQNIPWVLDPVAHFISVYRREAAQQLLAQRPTILRGNASEILALTGETGAGKGADSGDSVDAAQGAAKKLAAQFGTVVAITGPVDYLTDGTREAQVSGGSSLMPQVTALGCSQTALMGAYAATGPAFDAALAALAHFKVAGSTAAQRADGPGSFQMHFLDALANTQPFELAQVIR</sequence>
<accession>Q162K5</accession>
<reference key="1">
    <citation type="journal article" date="2007" name="J. Bacteriol.">
        <title>The complete genome sequence of Roseobacter denitrificans reveals a mixotrophic rather than photosynthetic metabolism.</title>
        <authorList>
            <person name="Swingley W.D."/>
            <person name="Sadekar S."/>
            <person name="Mastrian S.D."/>
            <person name="Matthies H.J."/>
            <person name="Hao J."/>
            <person name="Ramos H."/>
            <person name="Acharya C.R."/>
            <person name="Conrad A.L."/>
            <person name="Taylor H.L."/>
            <person name="Dejesa L.C."/>
            <person name="Shah M.K."/>
            <person name="O'Huallachain M.E."/>
            <person name="Lince M.T."/>
            <person name="Blankenship R.E."/>
            <person name="Beatty J.T."/>
            <person name="Touchman J.W."/>
        </authorList>
    </citation>
    <scope>NUCLEOTIDE SEQUENCE [LARGE SCALE GENOMIC DNA]</scope>
    <source>
        <strain>ATCC 33942 / OCh 114</strain>
    </source>
</reference>
<comment type="function">
    <text evidence="1">Catalyzes the phosphorylation of the hydroxyl group of 4-methyl-5-beta-hydroxyethylthiazole (THZ).</text>
</comment>
<comment type="catalytic activity">
    <reaction evidence="1">
        <text>5-(2-hydroxyethyl)-4-methylthiazole + ATP = 4-methyl-5-(2-phosphooxyethyl)-thiazole + ADP + H(+)</text>
        <dbReference type="Rhea" id="RHEA:24212"/>
        <dbReference type="ChEBI" id="CHEBI:15378"/>
        <dbReference type="ChEBI" id="CHEBI:17957"/>
        <dbReference type="ChEBI" id="CHEBI:30616"/>
        <dbReference type="ChEBI" id="CHEBI:58296"/>
        <dbReference type="ChEBI" id="CHEBI:456216"/>
        <dbReference type="EC" id="2.7.1.50"/>
    </reaction>
</comment>
<comment type="cofactor">
    <cofactor evidence="1">
        <name>Mg(2+)</name>
        <dbReference type="ChEBI" id="CHEBI:18420"/>
    </cofactor>
</comment>
<comment type="pathway">
    <text evidence="1">Cofactor biosynthesis; thiamine diphosphate biosynthesis; 4-methyl-5-(2-phosphoethyl)-thiazole from 5-(2-hydroxyethyl)-4-methylthiazole: step 1/1.</text>
</comment>
<comment type="similarity">
    <text evidence="1">Belongs to the Thz kinase family.</text>
</comment>